<dbReference type="EC" id="2.1.1.178" evidence="1"/>
<dbReference type="EMBL" id="CP000469">
    <property type="protein sequence ID" value="ABK48003.1"/>
    <property type="status" value="ALT_INIT"/>
    <property type="molecule type" value="Genomic_DNA"/>
</dbReference>
<dbReference type="RefSeq" id="WP_041412996.1">
    <property type="nucleotide sequence ID" value="NC_008577.1"/>
</dbReference>
<dbReference type="SMR" id="A0KW34"/>
<dbReference type="STRING" id="94122.Shewana3_1770"/>
<dbReference type="KEGG" id="shn:Shewana3_1770"/>
<dbReference type="eggNOG" id="COG0144">
    <property type="taxonomic scope" value="Bacteria"/>
</dbReference>
<dbReference type="eggNOG" id="COG3270">
    <property type="taxonomic scope" value="Bacteria"/>
</dbReference>
<dbReference type="HOGENOM" id="CLU_005316_6_2_6"/>
<dbReference type="OrthoDB" id="9810297at2"/>
<dbReference type="Proteomes" id="UP000002589">
    <property type="component" value="Chromosome"/>
</dbReference>
<dbReference type="GO" id="GO:0005737">
    <property type="term" value="C:cytoplasm"/>
    <property type="evidence" value="ECO:0007669"/>
    <property type="project" value="UniProtKB-SubCell"/>
</dbReference>
<dbReference type="GO" id="GO:0003723">
    <property type="term" value="F:RNA binding"/>
    <property type="evidence" value="ECO:0007669"/>
    <property type="project" value="UniProtKB-KW"/>
</dbReference>
<dbReference type="GO" id="GO:0009383">
    <property type="term" value="F:rRNA (cytosine-C5-)-methyltransferase activity"/>
    <property type="evidence" value="ECO:0007669"/>
    <property type="project" value="TreeGrafter"/>
</dbReference>
<dbReference type="GO" id="GO:0070475">
    <property type="term" value="P:rRNA base methylation"/>
    <property type="evidence" value="ECO:0007669"/>
    <property type="project" value="TreeGrafter"/>
</dbReference>
<dbReference type="CDD" id="cd02440">
    <property type="entry name" value="AdoMet_MTases"/>
    <property type="match status" value="1"/>
</dbReference>
<dbReference type="FunFam" id="3.40.50.150:FF:000079">
    <property type="entry name" value="Ribosomal RNA small subunit methyltransferase F"/>
    <property type="match status" value="1"/>
</dbReference>
<dbReference type="Gene3D" id="3.10.450.720">
    <property type="match status" value="1"/>
</dbReference>
<dbReference type="Gene3D" id="3.40.50.150">
    <property type="entry name" value="Vaccinia Virus protein VP39"/>
    <property type="match status" value="1"/>
</dbReference>
<dbReference type="HAMAP" id="MF_01579">
    <property type="entry name" value="16SrRNA_methyltr_F"/>
    <property type="match status" value="1"/>
</dbReference>
<dbReference type="InterPro" id="IPR031341">
    <property type="entry name" value="Methyltr_RsmF_N"/>
</dbReference>
<dbReference type="InterPro" id="IPR049560">
    <property type="entry name" value="MeTrfase_RsmB-F_NOP2_cat"/>
</dbReference>
<dbReference type="InterPro" id="IPR001678">
    <property type="entry name" value="MeTrfase_RsmB-F_NOP2_dom"/>
</dbReference>
<dbReference type="InterPro" id="IPR027391">
    <property type="entry name" value="Nol1_Nop2_Fmu_2"/>
</dbReference>
<dbReference type="InterPro" id="IPR011023">
    <property type="entry name" value="Nop2p"/>
</dbReference>
<dbReference type="InterPro" id="IPR023267">
    <property type="entry name" value="RCMT"/>
</dbReference>
<dbReference type="InterPro" id="IPR023545">
    <property type="entry name" value="rRNA_ssu_MeTfrase_F"/>
</dbReference>
<dbReference type="InterPro" id="IPR029063">
    <property type="entry name" value="SAM-dependent_MTases_sf"/>
</dbReference>
<dbReference type="InterPro" id="IPR048457">
    <property type="entry name" value="YebU_pre-PUA_dom"/>
</dbReference>
<dbReference type="NCBIfam" id="TIGR00446">
    <property type="entry name" value="nop2p"/>
    <property type="match status" value="1"/>
</dbReference>
<dbReference type="NCBIfam" id="NF008898">
    <property type="entry name" value="PRK11933.1"/>
    <property type="match status" value="1"/>
</dbReference>
<dbReference type="PANTHER" id="PTHR22807:SF30">
    <property type="entry name" value="28S RRNA (CYTOSINE(4447)-C(5))-METHYLTRANSFERASE-RELATED"/>
    <property type="match status" value="1"/>
</dbReference>
<dbReference type="PANTHER" id="PTHR22807">
    <property type="entry name" value="NOP2 YEAST -RELATED NOL1/NOP2/FMU SUN DOMAIN-CONTAINING"/>
    <property type="match status" value="1"/>
</dbReference>
<dbReference type="Pfam" id="PF01189">
    <property type="entry name" value="Methyltr_RsmB-F"/>
    <property type="match status" value="1"/>
</dbReference>
<dbReference type="Pfam" id="PF17125">
    <property type="entry name" value="Methyltr_RsmF_N"/>
    <property type="match status" value="1"/>
</dbReference>
<dbReference type="Pfam" id="PF13636">
    <property type="entry name" value="Methyltranf_PUA"/>
    <property type="match status" value="1"/>
</dbReference>
<dbReference type="Pfam" id="PF21150">
    <property type="entry name" value="YebU_pre-PUA_dom"/>
    <property type="match status" value="1"/>
</dbReference>
<dbReference type="PRINTS" id="PR02008">
    <property type="entry name" value="RCMTFAMILY"/>
</dbReference>
<dbReference type="SUPFAM" id="SSF53335">
    <property type="entry name" value="S-adenosyl-L-methionine-dependent methyltransferases"/>
    <property type="match status" value="1"/>
</dbReference>
<dbReference type="PROSITE" id="PS51686">
    <property type="entry name" value="SAM_MT_RSMB_NOP"/>
    <property type="match status" value="1"/>
</dbReference>
<name>RSMF_SHESA</name>
<feature type="chain" id="PRO_0000285013" description="Ribosomal RNA small subunit methyltransferase F">
    <location>
        <begin position="1"/>
        <end position="482"/>
    </location>
</feature>
<feature type="active site" description="Nucleophile" evidence="1">
    <location>
        <position position="241"/>
    </location>
</feature>
<feature type="binding site" evidence="1">
    <location>
        <begin position="119"/>
        <end position="125"/>
    </location>
    <ligand>
        <name>S-adenosyl-L-methionine</name>
        <dbReference type="ChEBI" id="CHEBI:59789"/>
    </ligand>
</feature>
<feature type="binding site" evidence="1">
    <location>
        <position position="143"/>
    </location>
    <ligand>
        <name>S-adenosyl-L-methionine</name>
        <dbReference type="ChEBI" id="CHEBI:59789"/>
    </ligand>
</feature>
<feature type="binding site" evidence="1">
    <location>
        <position position="170"/>
    </location>
    <ligand>
        <name>S-adenosyl-L-methionine</name>
        <dbReference type="ChEBI" id="CHEBI:59789"/>
    </ligand>
</feature>
<feature type="binding site" evidence="1">
    <location>
        <position position="188"/>
    </location>
    <ligand>
        <name>S-adenosyl-L-methionine</name>
        <dbReference type="ChEBI" id="CHEBI:59789"/>
    </ligand>
</feature>
<accession>A0KW34</accession>
<sequence length="482" mass="53577">MVQLNQNFINTIAQELPAHLSMDDFIAACSRPLRRSIRVNTLKTSSEDFKRLMQPKGWTFEPIPWCEDGFWISYDEEEQLGNALEHIQGLFYIQEASSMLPPTALFTPNADWQCVLDLASAPGSKTTQMAALMNNQGLLVANEYSASRVKVLHANVLRMGASHCALTHFDGRVFGEYLYESFDAVLIDAPCGGEGTVRKDADALKSWSLDEVIEISETQKALIESAFLALKPGGSLVYSTCTLNRHENQGVCEYLQQTYGDAVQFESLSQLFDGAEKATTPEGFLHVWPQIYDSEGFFVAKLTKTRSVPRLQPEPKLQKNFPFTEASAKQAKAIQAYFADDLGIELPDDLIMVRDDEFWLFPHEFRDFIGKMRFQRIGVKLADHSKHGFKVRHEAIIALAGKALKAGAKNGAKVVEVSDEQAKEYLMGRDIPLDTAGKAQGEVIVCYGGAPLGMAKHLGNKLKNSLPRDLVKDKVLLLPPQA</sequence>
<protein>
    <recommendedName>
        <fullName evidence="1">Ribosomal RNA small subunit methyltransferase F</fullName>
        <ecNumber evidence="1">2.1.1.178</ecNumber>
    </recommendedName>
    <alternativeName>
        <fullName evidence="1">16S rRNA m5C1407 methyltransferase</fullName>
    </alternativeName>
    <alternativeName>
        <fullName evidence="1">rRNA (cytosine-C(5)-)-methyltransferase RsmF</fullName>
    </alternativeName>
</protein>
<keyword id="KW-0963">Cytoplasm</keyword>
<keyword id="KW-0489">Methyltransferase</keyword>
<keyword id="KW-0694">RNA-binding</keyword>
<keyword id="KW-0698">rRNA processing</keyword>
<keyword id="KW-0949">S-adenosyl-L-methionine</keyword>
<keyword id="KW-0808">Transferase</keyword>
<gene>
    <name evidence="1" type="primary">rsmF</name>
    <name type="ordered locus">Shewana3_1770</name>
</gene>
<evidence type="ECO:0000255" key="1">
    <source>
        <dbReference type="HAMAP-Rule" id="MF_01579"/>
    </source>
</evidence>
<evidence type="ECO:0000305" key="2"/>
<organism>
    <name type="scientific">Shewanella sp. (strain ANA-3)</name>
    <dbReference type="NCBI Taxonomy" id="94122"/>
    <lineage>
        <taxon>Bacteria</taxon>
        <taxon>Pseudomonadati</taxon>
        <taxon>Pseudomonadota</taxon>
        <taxon>Gammaproteobacteria</taxon>
        <taxon>Alteromonadales</taxon>
        <taxon>Shewanellaceae</taxon>
        <taxon>Shewanella</taxon>
    </lineage>
</organism>
<proteinExistence type="inferred from homology"/>
<comment type="function">
    <text evidence="1">Specifically methylates the cytosine at position 1407 (m5C1407) of 16S rRNA.</text>
</comment>
<comment type="catalytic activity">
    <reaction evidence="1">
        <text>cytidine(1407) in 16S rRNA + S-adenosyl-L-methionine = 5-methylcytidine(1407) in 16S rRNA + S-adenosyl-L-homocysteine + H(+)</text>
        <dbReference type="Rhea" id="RHEA:42756"/>
        <dbReference type="Rhea" id="RHEA-COMP:10223"/>
        <dbReference type="Rhea" id="RHEA-COMP:10224"/>
        <dbReference type="ChEBI" id="CHEBI:15378"/>
        <dbReference type="ChEBI" id="CHEBI:57856"/>
        <dbReference type="ChEBI" id="CHEBI:59789"/>
        <dbReference type="ChEBI" id="CHEBI:74483"/>
        <dbReference type="ChEBI" id="CHEBI:82748"/>
        <dbReference type="EC" id="2.1.1.178"/>
    </reaction>
</comment>
<comment type="subcellular location">
    <subcellularLocation>
        <location evidence="1">Cytoplasm</location>
    </subcellularLocation>
</comment>
<comment type="similarity">
    <text evidence="1">Belongs to the class I-like SAM-binding methyltransferase superfamily. RsmB/NOP family.</text>
</comment>
<comment type="sequence caution" evidence="2">
    <conflict type="erroneous initiation">
        <sequence resource="EMBL-CDS" id="ABK48003"/>
    </conflict>
</comment>
<reference key="1">
    <citation type="submission" date="2006-09" db="EMBL/GenBank/DDBJ databases">
        <title>Complete sequence of chromosome 1 of Shewanella sp. ANA-3.</title>
        <authorList>
            <person name="Copeland A."/>
            <person name="Lucas S."/>
            <person name="Lapidus A."/>
            <person name="Barry K."/>
            <person name="Detter J.C."/>
            <person name="Glavina del Rio T."/>
            <person name="Hammon N."/>
            <person name="Israni S."/>
            <person name="Dalin E."/>
            <person name="Tice H."/>
            <person name="Pitluck S."/>
            <person name="Chertkov O."/>
            <person name="Brettin T."/>
            <person name="Bruce D."/>
            <person name="Han C."/>
            <person name="Tapia R."/>
            <person name="Gilna P."/>
            <person name="Schmutz J."/>
            <person name="Larimer F."/>
            <person name="Land M."/>
            <person name="Hauser L."/>
            <person name="Kyrpides N."/>
            <person name="Kim E."/>
            <person name="Newman D."/>
            <person name="Salticov C."/>
            <person name="Konstantinidis K."/>
            <person name="Klappenback J."/>
            <person name="Tiedje J."/>
            <person name="Richardson P."/>
        </authorList>
    </citation>
    <scope>NUCLEOTIDE SEQUENCE [LARGE SCALE GENOMIC DNA]</scope>
    <source>
        <strain>ANA-3</strain>
    </source>
</reference>